<evidence type="ECO:0000255" key="1">
    <source>
        <dbReference type="HAMAP-Rule" id="MF_00046"/>
    </source>
</evidence>
<sequence>MSKTYHFIGIKGSGMSALALMLHQMGHKVQGSDVEKYYFTQRGLEQAGITILPFDEKNLDGDMEIIAGNAFRPDNNVEIAYADQNGISYKRYHEFLGSFMRDFVSMGVAGAHGKTSTTGMLSHVLSHITDTSFLIGDGTGRGSANAKYFVFESDEYERHFMPYHPEYSIITNIDFDHPDYFTSLEDVFNAFNDYAKQITKGLFVYGEDAELRKITSDAPIYYYGFEAEGNDFVASDLLRSTTGSTFTVHFRGQNLGQFHIPTFGRHNIMNATAVIGLLYTAGFDLNLVREHLKTFAGVKRRFTEKIVNDTVIIDDFAHHPTEIIATLDAARQKYPSKEIVAVFQPHTFTRTIALLDDFAHALNQADAVYLAQIYGSAREVDHGDVKVEDLANKINKKHQVITVENVSPLLDHDNAVYVFMGAGDIQTYEYSFERLLSNLTSNVQ</sequence>
<feature type="chain" id="PRO_1000091142" description="UDP-N-acetylmuramate--L-alanine ligase">
    <location>
        <begin position="1"/>
        <end position="444"/>
    </location>
</feature>
<feature type="binding site" evidence="1">
    <location>
        <begin position="110"/>
        <end position="116"/>
    </location>
    <ligand>
        <name>ATP</name>
        <dbReference type="ChEBI" id="CHEBI:30616"/>
    </ligand>
</feature>
<reference key="1">
    <citation type="journal article" date="2001" name="Microb. Drug Resist.">
        <title>Annotated draft genomic sequence from a Streptococcus pneumoniae type 19F clinical isolate.</title>
        <authorList>
            <person name="Dopazo J."/>
            <person name="Mendoza A."/>
            <person name="Herrero J."/>
            <person name="Caldara F."/>
            <person name="Humbert Y."/>
            <person name="Friedli L."/>
            <person name="Guerrier M."/>
            <person name="Grand-Schenk E."/>
            <person name="Gandin C."/>
            <person name="de Francesco M."/>
            <person name="Polissi A."/>
            <person name="Buell G."/>
            <person name="Feger G."/>
            <person name="Garcia E."/>
            <person name="Peitsch M."/>
            <person name="Garcia-Bustos J.F."/>
        </authorList>
    </citation>
    <scope>NUCLEOTIDE SEQUENCE [LARGE SCALE GENOMIC DNA]</scope>
    <source>
        <strain>G54</strain>
    </source>
</reference>
<reference key="2">
    <citation type="submission" date="2008-03" db="EMBL/GenBank/DDBJ databases">
        <title>Pneumococcal beta glucoside metabolism investigated by whole genome comparison.</title>
        <authorList>
            <person name="Mulas L."/>
            <person name="Trappetti C."/>
            <person name="Hakenbeck R."/>
            <person name="Iannelli F."/>
            <person name="Pozzi G."/>
            <person name="Davidsen T.M."/>
            <person name="Tettelin H."/>
            <person name="Oggioni M."/>
        </authorList>
    </citation>
    <scope>NUCLEOTIDE SEQUENCE [LARGE SCALE GENOMIC DNA]</scope>
    <source>
        <strain>G54</strain>
    </source>
</reference>
<gene>
    <name evidence="1" type="primary">murC</name>
    <name type="ordered locus">SPG_1445</name>
</gene>
<organism>
    <name type="scientific">Streptococcus pneumoniae serotype 19F (strain G54)</name>
    <dbReference type="NCBI Taxonomy" id="512566"/>
    <lineage>
        <taxon>Bacteria</taxon>
        <taxon>Bacillati</taxon>
        <taxon>Bacillota</taxon>
        <taxon>Bacilli</taxon>
        <taxon>Lactobacillales</taxon>
        <taxon>Streptococcaceae</taxon>
        <taxon>Streptococcus</taxon>
    </lineage>
</organism>
<proteinExistence type="inferred from homology"/>
<protein>
    <recommendedName>
        <fullName evidence="1">UDP-N-acetylmuramate--L-alanine ligase</fullName>
        <ecNumber evidence="1">6.3.2.8</ecNumber>
    </recommendedName>
    <alternativeName>
        <fullName evidence="1">UDP-N-acetylmuramoyl-L-alanine synthetase</fullName>
    </alternativeName>
</protein>
<accession>B5E685</accession>
<comment type="function">
    <text evidence="1">Cell wall formation.</text>
</comment>
<comment type="catalytic activity">
    <reaction evidence="1">
        <text>UDP-N-acetyl-alpha-D-muramate + L-alanine + ATP = UDP-N-acetyl-alpha-D-muramoyl-L-alanine + ADP + phosphate + H(+)</text>
        <dbReference type="Rhea" id="RHEA:23372"/>
        <dbReference type="ChEBI" id="CHEBI:15378"/>
        <dbReference type="ChEBI" id="CHEBI:30616"/>
        <dbReference type="ChEBI" id="CHEBI:43474"/>
        <dbReference type="ChEBI" id="CHEBI:57972"/>
        <dbReference type="ChEBI" id="CHEBI:70757"/>
        <dbReference type="ChEBI" id="CHEBI:83898"/>
        <dbReference type="ChEBI" id="CHEBI:456216"/>
        <dbReference type="EC" id="6.3.2.8"/>
    </reaction>
</comment>
<comment type="pathway">
    <text evidence="1">Cell wall biogenesis; peptidoglycan biosynthesis.</text>
</comment>
<comment type="subcellular location">
    <subcellularLocation>
        <location evidence="1">Cytoplasm</location>
    </subcellularLocation>
</comment>
<comment type="similarity">
    <text evidence="1">Belongs to the MurCDEF family.</text>
</comment>
<dbReference type="EC" id="6.3.2.8" evidence="1"/>
<dbReference type="EMBL" id="CP001015">
    <property type="protein sequence ID" value="ACF56385.1"/>
    <property type="molecule type" value="Genomic_DNA"/>
</dbReference>
<dbReference type="SMR" id="B5E685"/>
<dbReference type="KEGG" id="spx:SPG_1445"/>
<dbReference type="HOGENOM" id="CLU_028104_1_0_9"/>
<dbReference type="UniPathway" id="UPA00219"/>
<dbReference type="GO" id="GO:0005737">
    <property type="term" value="C:cytoplasm"/>
    <property type="evidence" value="ECO:0007669"/>
    <property type="project" value="UniProtKB-SubCell"/>
</dbReference>
<dbReference type="GO" id="GO:0005524">
    <property type="term" value="F:ATP binding"/>
    <property type="evidence" value="ECO:0007669"/>
    <property type="project" value="UniProtKB-UniRule"/>
</dbReference>
<dbReference type="GO" id="GO:0008763">
    <property type="term" value="F:UDP-N-acetylmuramate-L-alanine ligase activity"/>
    <property type="evidence" value="ECO:0007669"/>
    <property type="project" value="UniProtKB-UniRule"/>
</dbReference>
<dbReference type="GO" id="GO:0051301">
    <property type="term" value="P:cell division"/>
    <property type="evidence" value="ECO:0007669"/>
    <property type="project" value="UniProtKB-KW"/>
</dbReference>
<dbReference type="GO" id="GO:0071555">
    <property type="term" value="P:cell wall organization"/>
    <property type="evidence" value="ECO:0007669"/>
    <property type="project" value="UniProtKB-KW"/>
</dbReference>
<dbReference type="GO" id="GO:0009252">
    <property type="term" value="P:peptidoglycan biosynthetic process"/>
    <property type="evidence" value="ECO:0007669"/>
    <property type="project" value="UniProtKB-UniRule"/>
</dbReference>
<dbReference type="GO" id="GO:0008360">
    <property type="term" value="P:regulation of cell shape"/>
    <property type="evidence" value="ECO:0007669"/>
    <property type="project" value="UniProtKB-KW"/>
</dbReference>
<dbReference type="Gene3D" id="3.90.190.20">
    <property type="entry name" value="Mur ligase, C-terminal domain"/>
    <property type="match status" value="1"/>
</dbReference>
<dbReference type="Gene3D" id="3.40.1190.10">
    <property type="entry name" value="Mur-like, catalytic domain"/>
    <property type="match status" value="1"/>
</dbReference>
<dbReference type="Gene3D" id="3.40.50.720">
    <property type="entry name" value="NAD(P)-binding Rossmann-like Domain"/>
    <property type="match status" value="1"/>
</dbReference>
<dbReference type="HAMAP" id="MF_00046">
    <property type="entry name" value="MurC"/>
    <property type="match status" value="1"/>
</dbReference>
<dbReference type="InterPro" id="IPR036565">
    <property type="entry name" value="Mur-like_cat_sf"/>
</dbReference>
<dbReference type="InterPro" id="IPR004101">
    <property type="entry name" value="Mur_ligase_C"/>
</dbReference>
<dbReference type="InterPro" id="IPR036615">
    <property type="entry name" value="Mur_ligase_C_dom_sf"/>
</dbReference>
<dbReference type="InterPro" id="IPR013221">
    <property type="entry name" value="Mur_ligase_cen"/>
</dbReference>
<dbReference type="InterPro" id="IPR000713">
    <property type="entry name" value="Mur_ligase_N"/>
</dbReference>
<dbReference type="InterPro" id="IPR050061">
    <property type="entry name" value="MurCDEF_pg_biosynth"/>
</dbReference>
<dbReference type="InterPro" id="IPR005758">
    <property type="entry name" value="UDP-N-AcMur_Ala_ligase_MurC"/>
</dbReference>
<dbReference type="NCBIfam" id="TIGR01082">
    <property type="entry name" value="murC"/>
    <property type="match status" value="1"/>
</dbReference>
<dbReference type="PANTHER" id="PTHR43445:SF3">
    <property type="entry name" value="UDP-N-ACETYLMURAMATE--L-ALANINE LIGASE"/>
    <property type="match status" value="1"/>
</dbReference>
<dbReference type="PANTHER" id="PTHR43445">
    <property type="entry name" value="UDP-N-ACETYLMURAMATE--L-ALANINE LIGASE-RELATED"/>
    <property type="match status" value="1"/>
</dbReference>
<dbReference type="Pfam" id="PF01225">
    <property type="entry name" value="Mur_ligase"/>
    <property type="match status" value="1"/>
</dbReference>
<dbReference type="Pfam" id="PF02875">
    <property type="entry name" value="Mur_ligase_C"/>
    <property type="match status" value="1"/>
</dbReference>
<dbReference type="Pfam" id="PF08245">
    <property type="entry name" value="Mur_ligase_M"/>
    <property type="match status" value="1"/>
</dbReference>
<dbReference type="SUPFAM" id="SSF51984">
    <property type="entry name" value="MurCD N-terminal domain"/>
    <property type="match status" value="1"/>
</dbReference>
<dbReference type="SUPFAM" id="SSF53623">
    <property type="entry name" value="MurD-like peptide ligases, catalytic domain"/>
    <property type="match status" value="1"/>
</dbReference>
<dbReference type="SUPFAM" id="SSF53244">
    <property type="entry name" value="MurD-like peptide ligases, peptide-binding domain"/>
    <property type="match status" value="1"/>
</dbReference>
<name>MURC_STRP4</name>
<keyword id="KW-0067">ATP-binding</keyword>
<keyword id="KW-0131">Cell cycle</keyword>
<keyword id="KW-0132">Cell division</keyword>
<keyword id="KW-0133">Cell shape</keyword>
<keyword id="KW-0961">Cell wall biogenesis/degradation</keyword>
<keyword id="KW-0963">Cytoplasm</keyword>
<keyword id="KW-0436">Ligase</keyword>
<keyword id="KW-0547">Nucleotide-binding</keyword>
<keyword id="KW-0573">Peptidoglycan synthesis</keyword>